<organism>
    <name type="scientific">Thermus thermophilus (strain ATCC 27634 / DSM 579 / HB8)</name>
    <dbReference type="NCBI Taxonomy" id="300852"/>
    <lineage>
        <taxon>Bacteria</taxon>
        <taxon>Thermotogati</taxon>
        <taxon>Deinococcota</taxon>
        <taxon>Deinococci</taxon>
        <taxon>Thermales</taxon>
        <taxon>Thermaceae</taxon>
        <taxon>Thermus</taxon>
    </lineage>
</organism>
<name>DDL_THET8</name>
<dbReference type="EC" id="6.3.2.4" evidence="2"/>
<dbReference type="EMBL" id="AP008226">
    <property type="protein sequence ID" value="BAD71410.1"/>
    <property type="molecule type" value="Genomic_DNA"/>
</dbReference>
<dbReference type="RefSeq" id="WP_011228789.1">
    <property type="nucleotide sequence ID" value="NC_006461.1"/>
</dbReference>
<dbReference type="RefSeq" id="YP_144853.1">
    <property type="nucleotide sequence ID" value="NC_006461.1"/>
</dbReference>
<dbReference type="PDB" id="2FB9">
    <property type="method" value="X-ray"/>
    <property type="resolution" value="1.90 A"/>
    <property type="chains" value="A=1-319"/>
</dbReference>
<dbReference type="PDB" id="2YZG">
    <property type="method" value="X-ray"/>
    <property type="resolution" value="2.30 A"/>
    <property type="chains" value="A/B/C=1-319"/>
</dbReference>
<dbReference type="PDB" id="2YZM">
    <property type="method" value="X-ray"/>
    <property type="resolution" value="2.21 A"/>
    <property type="chains" value="A/B/C=1-319"/>
</dbReference>
<dbReference type="PDB" id="2YZN">
    <property type="method" value="X-ray"/>
    <property type="resolution" value="2.60 A"/>
    <property type="chains" value="A/B/C=1-319"/>
</dbReference>
<dbReference type="PDB" id="2ZDG">
    <property type="method" value="X-ray"/>
    <property type="resolution" value="2.20 A"/>
    <property type="chains" value="A/B/C/D=1-319"/>
</dbReference>
<dbReference type="PDB" id="2ZDH">
    <property type="method" value="X-ray"/>
    <property type="resolution" value="1.90 A"/>
    <property type="chains" value="A/B/C/D=1-319"/>
</dbReference>
<dbReference type="PDB" id="2ZDQ">
    <property type="method" value="X-ray"/>
    <property type="resolution" value="2.30 A"/>
    <property type="chains" value="A/B=1-319"/>
</dbReference>
<dbReference type="PDB" id="6U1C">
    <property type="method" value="X-ray"/>
    <property type="resolution" value="2.20 A"/>
    <property type="chains" value="A/B/C/D=1-319"/>
</dbReference>
<dbReference type="PDB" id="6U1D">
    <property type="method" value="X-ray"/>
    <property type="resolution" value="1.90 A"/>
    <property type="chains" value="A/B=1-319"/>
</dbReference>
<dbReference type="PDB" id="6U1E">
    <property type="method" value="X-ray"/>
    <property type="resolution" value="2.10 A"/>
    <property type="chains" value="A/B=1-319"/>
</dbReference>
<dbReference type="PDB" id="6U1F">
    <property type="method" value="X-ray"/>
    <property type="resolution" value="2.30 A"/>
    <property type="chains" value="A/B=1-319"/>
</dbReference>
<dbReference type="PDB" id="6U1G">
    <property type="method" value="X-ray"/>
    <property type="resolution" value="2.40 A"/>
    <property type="chains" value="A/B=1-319"/>
</dbReference>
<dbReference type="PDB" id="6U1H">
    <property type="method" value="X-ray"/>
    <property type="resolution" value="2.20 A"/>
    <property type="chains" value="A/B/C/D=1-319"/>
</dbReference>
<dbReference type="PDB" id="6U1I">
    <property type="method" value="X-ray"/>
    <property type="resolution" value="2.30 A"/>
    <property type="chains" value="A/B/C/D=1-319"/>
</dbReference>
<dbReference type="PDB" id="6U1J">
    <property type="method" value="X-ray"/>
    <property type="resolution" value="2.20 A"/>
    <property type="chains" value="A/B/C/D=1-319"/>
</dbReference>
<dbReference type="PDB" id="6U1K">
    <property type="method" value="X-ray"/>
    <property type="resolution" value="1.67 A"/>
    <property type="chains" value="A/B/C/D=1-319"/>
</dbReference>
<dbReference type="PDBsum" id="2FB9"/>
<dbReference type="PDBsum" id="2YZG"/>
<dbReference type="PDBsum" id="2YZM"/>
<dbReference type="PDBsum" id="2YZN"/>
<dbReference type="PDBsum" id="2ZDG"/>
<dbReference type="PDBsum" id="2ZDH"/>
<dbReference type="PDBsum" id="2ZDQ"/>
<dbReference type="PDBsum" id="6U1C"/>
<dbReference type="PDBsum" id="6U1D"/>
<dbReference type="PDBsum" id="6U1E"/>
<dbReference type="PDBsum" id="6U1F"/>
<dbReference type="PDBsum" id="6U1G"/>
<dbReference type="PDBsum" id="6U1H"/>
<dbReference type="PDBsum" id="6U1I"/>
<dbReference type="PDBsum" id="6U1J"/>
<dbReference type="PDBsum" id="6U1K"/>
<dbReference type="SMR" id="Q5SHZ3"/>
<dbReference type="EnsemblBacteria" id="BAD71410">
    <property type="protein sequence ID" value="BAD71410"/>
    <property type="gene ID" value="BAD71410"/>
</dbReference>
<dbReference type="GeneID" id="3168507"/>
<dbReference type="KEGG" id="ttj:TTHA1587"/>
<dbReference type="PATRIC" id="fig|300852.9.peg.1557"/>
<dbReference type="eggNOG" id="COG1181">
    <property type="taxonomic scope" value="Bacteria"/>
</dbReference>
<dbReference type="HOGENOM" id="CLU_039268_0_0_0"/>
<dbReference type="PhylomeDB" id="Q5SHZ3"/>
<dbReference type="BRENDA" id="6.3.2.4">
    <property type="organism ID" value="2305"/>
</dbReference>
<dbReference type="UniPathway" id="UPA00219"/>
<dbReference type="EvolutionaryTrace" id="Q5SHZ3"/>
<dbReference type="Proteomes" id="UP000000532">
    <property type="component" value="Chromosome"/>
</dbReference>
<dbReference type="GO" id="GO:0005829">
    <property type="term" value="C:cytosol"/>
    <property type="evidence" value="ECO:0007669"/>
    <property type="project" value="TreeGrafter"/>
</dbReference>
<dbReference type="GO" id="GO:0005524">
    <property type="term" value="F:ATP binding"/>
    <property type="evidence" value="ECO:0007669"/>
    <property type="project" value="UniProtKB-KW"/>
</dbReference>
<dbReference type="GO" id="GO:0008716">
    <property type="term" value="F:D-alanine-D-alanine ligase activity"/>
    <property type="evidence" value="ECO:0007669"/>
    <property type="project" value="UniProtKB-UniRule"/>
</dbReference>
<dbReference type="GO" id="GO:0046872">
    <property type="term" value="F:metal ion binding"/>
    <property type="evidence" value="ECO:0007669"/>
    <property type="project" value="UniProtKB-KW"/>
</dbReference>
<dbReference type="GO" id="GO:0071555">
    <property type="term" value="P:cell wall organization"/>
    <property type="evidence" value="ECO:0007669"/>
    <property type="project" value="UniProtKB-KW"/>
</dbReference>
<dbReference type="GO" id="GO:0009252">
    <property type="term" value="P:peptidoglycan biosynthetic process"/>
    <property type="evidence" value="ECO:0007669"/>
    <property type="project" value="UniProtKB-UniRule"/>
</dbReference>
<dbReference type="GO" id="GO:0008360">
    <property type="term" value="P:regulation of cell shape"/>
    <property type="evidence" value="ECO:0007669"/>
    <property type="project" value="UniProtKB-KW"/>
</dbReference>
<dbReference type="FunFam" id="3.30.470.20:FF:000008">
    <property type="entry name" value="D-alanine--D-alanine ligase"/>
    <property type="match status" value="1"/>
</dbReference>
<dbReference type="Gene3D" id="3.40.50.20">
    <property type="match status" value="1"/>
</dbReference>
<dbReference type="Gene3D" id="3.30.1490.20">
    <property type="entry name" value="ATP-grasp fold, A domain"/>
    <property type="match status" value="1"/>
</dbReference>
<dbReference type="Gene3D" id="3.30.470.20">
    <property type="entry name" value="ATP-grasp fold, B domain"/>
    <property type="match status" value="1"/>
</dbReference>
<dbReference type="HAMAP" id="MF_00047">
    <property type="entry name" value="Dala_Dala_lig"/>
    <property type="match status" value="1"/>
</dbReference>
<dbReference type="InterPro" id="IPR011761">
    <property type="entry name" value="ATP-grasp"/>
</dbReference>
<dbReference type="InterPro" id="IPR013815">
    <property type="entry name" value="ATP_grasp_subdomain_1"/>
</dbReference>
<dbReference type="InterPro" id="IPR000291">
    <property type="entry name" value="D-Ala_lig_Van_CS"/>
</dbReference>
<dbReference type="InterPro" id="IPR005905">
    <property type="entry name" value="D_ala_D_ala"/>
</dbReference>
<dbReference type="InterPro" id="IPR011095">
    <property type="entry name" value="Dala_Dala_lig_C"/>
</dbReference>
<dbReference type="InterPro" id="IPR011127">
    <property type="entry name" value="Dala_Dala_lig_N"/>
</dbReference>
<dbReference type="InterPro" id="IPR016185">
    <property type="entry name" value="PreATP-grasp_dom_sf"/>
</dbReference>
<dbReference type="NCBIfam" id="TIGR01205">
    <property type="entry name" value="D_ala_D_alaTIGR"/>
    <property type="match status" value="1"/>
</dbReference>
<dbReference type="NCBIfam" id="NF002378">
    <property type="entry name" value="PRK01372.1"/>
    <property type="match status" value="1"/>
</dbReference>
<dbReference type="NCBIfam" id="NF002528">
    <property type="entry name" value="PRK01966.1-4"/>
    <property type="match status" value="1"/>
</dbReference>
<dbReference type="PANTHER" id="PTHR23132">
    <property type="entry name" value="D-ALANINE--D-ALANINE LIGASE"/>
    <property type="match status" value="1"/>
</dbReference>
<dbReference type="PANTHER" id="PTHR23132:SF25">
    <property type="entry name" value="D-ALANINE--D-ALANINE LIGASE A"/>
    <property type="match status" value="1"/>
</dbReference>
<dbReference type="Pfam" id="PF07478">
    <property type="entry name" value="Dala_Dala_lig_C"/>
    <property type="match status" value="1"/>
</dbReference>
<dbReference type="Pfam" id="PF01820">
    <property type="entry name" value="Dala_Dala_lig_N"/>
    <property type="match status" value="1"/>
</dbReference>
<dbReference type="PIRSF" id="PIRSF039102">
    <property type="entry name" value="Ddl/VanB"/>
    <property type="match status" value="1"/>
</dbReference>
<dbReference type="SUPFAM" id="SSF56059">
    <property type="entry name" value="Glutathione synthetase ATP-binding domain-like"/>
    <property type="match status" value="1"/>
</dbReference>
<dbReference type="SUPFAM" id="SSF52440">
    <property type="entry name" value="PreATP-grasp domain"/>
    <property type="match status" value="1"/>
</dbReference>
<dbReference type="PROSITE" id="PS50975">
    <property type="entry name" value="ATP_GRASP"/>
    <property type="match status" value="1"/>
</dbReference>
<dbReference type="PROSITE" id="PS00843">
    <property type="entry name" value="DALA_DALA_LIGASE_1"/>
    <property type="match status" value="1"/>
</dbReference>
<dbReference type="PROSITE" id="PS00844">
    <property type="entry name" value="DALA_DALA_LIGASE_2"/>
    <property type="match status" value="1"/>
</dbReference>
<feature type="chain" id="PRO_0000341188" description="D-alanine--D-alanine ligase">
    <location>
        <begin position="1"/>
        <end position="319"/>
    </location>
</feature>
<feature type="domain" description="ATP-grasp" evidence="2">
    <location>
        <begin position="120"/>
        <end position="315"/>
    </location>
</feature>
<feature type="binding site" evidence="2">
    <location>
        <begin position="147"/>
        <end position="198"/>
    </location>
    <ligand>
        <name>ATP</name>
        <dbReference type="ChEBI" id="CHEBI:30616"/>
    </ligand>
</feature>
<feature type="binding site" evidence="2">
    <location>
        <position position="270"/>
    </location>
    <ligand>
        <name>Mg(2+)</name>
        <dbReference type="ChEBI" id="CHEBI:18420"/>
        <label>1</label>
    </ligand>
</feature>
<feature type="binding site" evidence="2">
    <location>
        <position position="282"/>
    </location>
    <ligand>
        <name>Mg(2+)</name>
        <dbReference type="ChEBI" id="CHEBI:18420"/>
        <label>1</label>
    </ligand>
</feature>
<feature type="binding site" evidence="2">
    <location>
        <position position="282"/>
    </location>
    <ligand>
        <name>Mg(2+)</name>
        <dbReference type="ChEBI" id="CHEBI:18420"/>
        <label>2</label>
    </ligand>
</feature>
<feature type="binding site" evidence="2">
    <location>
        <position position="284"/>
    </location>
    <ligand>
        <name>Mg(2+)</name>
        <dbReference type="ChEBI" id="CHEBI:18420"/>
        <label>2</label>
    </ligand>
</feature>
<feature type="strand" evidence="4">
    <location>
        <begin position="3"/>
        <end position="8"/>
    </location>
</feature>
<feature type="helix" evidence="4">
    <location>
        <begin position="14"/>
        <end position="27"/>
    </location>
</feature>
<feature type="strand" evidence="4">
    <location>
        <begin position="32"/>
        <end position="37"/>
    </location>
</feature>
<feature type="strand" evidence="3">
    <location>
        <begin position="43"/>
        <end position="45"/>
    </location>
</feature>
<feature type="helix" evidence="4">
    <location>
        <begin position="46"/>
        <end position="55"/>
    </location>
</feature>
<feature type="helix" evidence="4">
    <location>
        <begin position="71"/>
        <end position="73"/>
    </location>
</feature>
<feature type="strand" evidence="4">
    <location>
        <begin position="75"/>
        <end position="80"/>
    </location>
</feature>
<feature type="turn" evidence="4">
    <location>
        <begin position="84"/>
        <end position="86"/>
    </location>
</feature>
<feature type="strand" evidence="4">
    <location>
        <begin position="87"/>
        <end position="89"/>
    </location>
</feature>
<feature type="helix" evidence="4">
    <location>
        <begin position="90"/>
        <end position="98"/>
    </location>
</feature>
<feature type="strand" evidence="4">
    <location>
        <begin position="102"/>
        <end position="104"/>
    </location>
</feature>
<feature type="helix" evidence="4">
    <location>
        <begin position="107"/>
        <end position="114"/>
    </location>
</feature>
<feature type="helix" evidence="4">
    <location>
        <begin position="118"/>
        <end position="125"/>
    </location>
</feature>
<feature type="strand" evidence="4">
    <location>
        <begin position="133"/>
        <end position="137"/>
    </location>
</feature>
<feature type="strand" evidence="4">
    <location>
        <begin position="150"/>
        <end position="154"/>
    </location>
</feature>
<feature type="turn" evidence="4">
    <location>
        <begin position="159"/>
        <end position="162"/>
    </location>
</feature>
<feature type="strand" evidence="4">
    <location>
        <begin position="164"/>
        <end position="166"/>
    </location>
</feature>
<feature type="helix" evidence="4">
    <location>
        <begin position="169"/>
        <end position="171"/>
    </location>
</feature>
<feature type="helix" evidence="4">
    <location>
        <begin position="172"/>
        <end position="179"/>
    </location>
</feature>
<feature type="turn" evidence="4">
    <location>
        <begin position="180"/>
        <end position="182"/>
    </location>
</feature>
<feature type="strand" evidence="4">
    <location>
        <begin position="184"/>
        <end position="190"/>
    </location>
</feature>
<feature type="strand" evidence="4">
    <location>
        <begin position="196"/>
        <end position="207"/>
    </location>
</feature>
<feature type="strand" evidence="4">
    <location>
        <begin position="209"/>
        <end position="217"/>
    </location>
</feature>
<feature type="strand" evidence="4">
    <location>
        <begin position="219"/>
        <end position="222"/>
    </location>
</feature>
<feature type="helix" evidence="4">
    <location>
        <begin position="225"/>
        <end position="229"/>
    </location>
</feature>
<feature type="turn" evidence="4">
    <location>
        <begin position="231"/>
        <end position="233"/>
    </location>
</feature>
<feature type="strand" evidence="4">
    <location>
        <begin position="234"/>
        <end position="239"/>
    </location>
</feature>
<feature type="helix" evidence="4">
    <location>
        <begin position="244"/>
        <end position="260"/>
    </location>
</feature>
<feature type="strand" evidence="4">
    <location>
        <begin position="265"/>
        <end position="274"/>
    </location>
</feature>
<feature type="strand" evidence="4">
    <location>
        <begin position="277"/>
        <end position="286"/>
    </location>
</feature>
<feature type="helix" evidence="4">
    <location>
        <begin position="294"/>
        <end position="301"/>
    </location>
</feature>
<feature type="helix" evidence="4">
    <location>
        <begin position="306"/>
        <end position="319"/>
    </location>
</feature>
<sequence length="319" mass="34666">MRVLLIAGGVSPEHEVSLLSAEGVLRHIPFPTDLAVIAQDGRWLLGEKALTALEAKAAPEGEHPFPPPLSWERYDVVFPLLHGRFGEDGTVQGFLELLGKPYVGAGVAASALCMDKDLSKRVLAQAGVPVVPWVAVRKGEPPVVPFDPPFFVKPANTGSSVGISRVERFQDLEAALALAFRYDEKAVVEKALSPVRELEVGVLGNVFGEASPVGEVRYEAPFYDYETKYTPGRAELLIPAPLDPGTQETVQELALKAYKVLGVRGMARVDFFLAEGELYLNELNTIPGFTPTSMYPRLFEAGGVAYPELLRRLVELALT</sequence>
<gene>
    <name evidence="2" type="primary">ddl</name>
    <name type="ordered locus">TTHA1587</name>
</gene>
<protein>
    <recommendedName>
        <fullName evidence="2">D-alanine--D-alanine ligase</fullName>
        <ecNumber evidence="2">6.3.2.4</ecNumber>
    </recommendedName>
    <alternativeName>
        <fullName evidence="2">D-Ala-D-Ala ligase</fullName>
    </alternativeName>
    <alternativeName>
        <fullName evidence="2">D-alanylalanine synthetase</fullName>
    </alternativeName>
</protein>
<accession>Q5SHZ3</accession>
<comment type="function">
    <text evidence="2">Cell wall formation.</text>
</comment>
<comment type="catalytic activity">
    <reaction evidence="2">
        <text>2 D-alanine + ATP = D-alanyl-D-alanine + ADP + phosphate + H(+)</text>
        <dbReference type="Rhea" id="RHEA:11224"/>
        <dbReference type="ChEBI" id="CHEBI:15378"/>
        <dbReference type="ChEBI" id="CHEBI:30616"/>
        <dbReference type="ChEBI" id="CHEBI:43474"/>
        <dbReference type="ChEBI" id="CHEBI:57416"/>
        <dbReference type="ChEBI" id="CHEBI:57822"/>
        <dbReference type="ChEBI" id="CHEBI:456216"/>
        <dbReference type="EC" id="6.3.2.4"/>
    </reaction>
</comment>
<comment type="cofactor">
    <cofactor evidence="1">
        <name>Mg(2+)</name>
        <dbReference type="ChEBI" id="CHEBI:18420"/>
    </cofactor>
    <cofactor evidence="1">
        <name>Mn(2+)</name>
        <dbReference type="ChEBI" id="CHEBI:29035"/>
    </cofactor>
    <text evidence="1">Binds 2 magnesium or manganese ions per subunit.</text>
</comment>
<comment type="pathway">
    <text evidence="2">Cell wall biogenesis; peptidoglycan biosynthesis.</text>
</comment>
<comment type="subcellular location">
    <subcellularLocation>
        <location evidence="2">Cytoplasm</location>
    </subcellularLocation>
</comment>
<comment type="similarity">
    <text evidence="2">Belongs to the D-alanine--D-alanine ligase family.</text>
</comment>
<proteinExistence type="evidence at protein level"/>
<keyword id="KW-0002">3D-structure</keyword>
<keyword id="KW-0067">ATP-binding</keyword>
<keyword id="KW-0133">Cell shape</keyword>
<keyword id="KW-0961">Cell wall biogenesis/degradation</keyword>
<keyword id="KW-0963">Cytoplasm</keyword>
<keyword id="KW-0436">Ligase</keyword>
<keyword id="KW-0460">Magnesium</keyword>
<keyword id="KW-0464">Manganese</keyword>
<keyword id="KW-0479">Metal-binding</keyword>
<keyword id="KW-0547">Nucleotide-binding</keyword>
<keyword id="KW-0573">Peptidoglycan synthesis</keyword>
<keyword id="KW-1185">Reference proteome</keyword>
<reference key="1">
    <citation type="submission" date="2004-11" db="EMBL/GenBank/DDBJ databases">
        <title>Complete genome sequence of Thermus thermophilus HB8.</title>
        <authorList>
            <person name="Masui R."/>
            <person name="Kurokawa K."/>
            <person name="Nakagawa N."/>
            <person name="Tokunaga F."/>
            <person name="Koyama Y."/>
            <person name="Shibata T."/>
            <person name="Oshima T."/>
            <person name="Yokoyama S."/>
            <person name="Yasunaga T."/>
            <person name="Kuramitsu S."/>
        </authorList>
    </citation>
    <scope>NUCLEOTIDE SEQUENCE [LARGE SCALE GENOMIC DNA]</scope>
    <source>
        <strain>ATCC 27634 / DSM 579 / HB8</strain>
    </source>
</reference>
<evidence type="ECO:0000250" key="1"/>
<evidence type="ECO:0000255" key="2">
    <source>
        <dbReference type="HAMAP-Rule" id="MF_00047"/>
    </source>
</evidence>
<evidence type="ECO:0007829" key="3">
    <source>
        <dbReference type="PDB" id="6U1H"/>
    </source>
</evidence>
<evidence type="ECO:0007829" key="4">
    <source>
        <dbReference type="PDB" id="6U1K"/>
    </source>
</evidence>